<name>INH16_ECOLI</name>
<accession>P0CE63</accession>
<accession>O07987</accession>
<accession>O07988</accession>
<accession>P03837</accession>
<accession>P76355</accession>
<accession>Q2MBK1</accession>
<accession>Q2MBM8</accession>
<proteinExistence type="inferred from homology"/>
<dbReference type="EMBL" id="AP009048">
    <property type="protein sequence ID" value="BAE77582.1"/>
    <property type="molecule type" value="Genomic_DNA"/>
</dbReference>
<dbReference type="RefSeq" id="WP_000019403.1">
    <property type="nucleotide sequence ID" value="NZ_SSZK01000120.1"/>
</dbReference>
<dbReference type="KEGG" id="ecj:JW5935"/>
<dbReference type="KEGG" id="ecoc:C3026_01250"/>
<dbReference type="KEGG" id="ecoc:C3026_02730"/>
<dbReference type="KEGG" id="ecoc:C3026_03280"/>
<dbReference type="KEGG" id="ecoc:C3026_07795"/>
<dbReference type="KEGG" id="ecoc:C3026_10760"/>
<dbReference type="KEGG" id="ecoc:C3026_11440"/>
<dbReference type="KEGG" id="ecoc:C3026_12250"/>
<dbReference type="KEGG" id="ecoc:C3026_16315"/>
<dbReference type="KEGG" id="ecoc:C3026_17505"/>
<dbReference type="KEGG" id="ecoc:C3026_18985"/>
<dbReference type="KEGG" id="ecoc:C3026_23975"/>
<dbReference type="HOGENOM" id="CLU_049873_1_2_6"/>
<dbReference type="PhylomeDB" id="P0CE63"/>
<dbReference type="PRO" id="PR:P0CE63"/>
<dbReference type="GO" id="GO:0003677">
    <property type="term" value="F:DNA binding"/>
    <property type="evidence" value="ECO:0007669"/>
    <property type="project" value="UniProtKB-KW"/>
</dbReference>
<dbReference type="GO" id="GO:0004803">
    <property type="term" value="F:transposase activity"/>
    <property type="evidence" value="ECO:0007669"/>
    <property type="project" value="InterPro"/>
</dbReference>
<dbReference type="GO" id="GO:0006313">
    <property type="term" value="P:DNA transposition"/>
    <property type="evidence" value="ECO:0007669"/>
    <property type="project" value="InterPro"/>
</dbReference>
<dbReference type="InterPro" id="IPR047959">
    <property type="entry name" value="Transpos_IS5"/>
</dbReference>
<dbReference type="InterPro" id="IPR002559">
    <property type="entry name" value="Transposase_11"/>
</dbReference>
<dbReference type="InterPro" id="IPR008490">
    <property type="entry name" value="Transposase_InsH_N"/>
</dbReference>
<dbReference type="NCBIfam" id="NF033581">
    <property type="entry name" value="transpos_IS5_4"/>
    <property type="match status" value="1"/>
</dbReference>
<dbReference type="PANTHER" id="PTHR35604">
    <property type="entry name" value="TRANSPOSASE INSH FOR INSERTION SEQUENCE ELEMENT IS5A-RELATED"/>
    <property type="match status" value="1"/>
</dbReference>
<dbReference type="PANTHER" id="PTHR35604:SF2">
    <property type="entry name" value="TRANSPOSASE INSH FOR INSERTION SEQUENCE ELEMENT IS5A-RELATED"/>
    <property type="match status" value="1"/>
</dbReference>
<dbReference type="Pfam" id="PF01609">
    <property type="entry name" value="DDE_Tnp_1"/>
    <property type="match status" value="1"/>
</dbReference>
<dbReference type="Pfam" id="PF05598">
    <property type="entry name" value="DUF772"/>
    <property type="match status" value="1"/>
</dbReference>
<gene>
    <name type="ordered locus">JW5935</name>
</gene>
<organism>
    <name type="scientific">Escherichia coli (strain K12)</name>
    <dbReference type="NCBI Taxonomy" id="83333"/>
    <lineage>
        <taxon>Bacteria</taxon>
        <taxon>Pseudomonadati</taxon>
        <taxon>Pseudomonadota</taxon>
        <taxon>Gammaproteobacteria</taxon>
        <taxon>Enterobacterales</taxon>
        <taxon>Enterobacteriaceae</taxon>
        <taxon>Escherichia</taxon>
    </lineage>
</organism>
<reference key="1">
    <citation type="journal article" date="1996" name="DNA Res.">
        <title>A 570-kb DNA sequence of the Escherichia coli K-12 genome corresponding to the 28.0-40.1 min region on the linkage map.</title>
        <authorList>
            <person name="Aiba H."/>
            <person name="Baba T."/>
            <person name="Fujita K."/>
            <person name="Hayashi K."/>
            <person name="Inada T."/>
            <person name="Isono K."/>
            <person name="Itoh T."/>
            <person name="Kasai H."/>
            <person name="Kashimoto K."/>
            <person name="Kimura S."/>
            <person name="Kitakawa M."/>
            <person name="Kitagawa M."/>
            <person name="Makino K."/>
            <person name="Miki T."/>
            <person name="Mizobuchi K."/>
            <person name="Mori H."/>
            <person name="Mori T."/>
            <person name="Motomura K."/>
            <person name="Nakade S."/>
            <person name="Nakamura Y."/>
            <person name="Nashimoto H."/>
            <person name="Nishio Y."/>
            <person name="Oshima T."/>
            <person name="Saito N."/>
            <person name="Sampei G."/>
            <person name="Seki Y."/>
            <person name="Sivasundaram S."/>
            <person name="Tagami H."/>
            <person name="Takeda J."/>
            <person name="Takemoto K."/>
            <person name="Takeuchi Y."/>
            <person name="Wada C."/>
            <person name="Yamamoto Y."/>
            <person name="Horiuchi T."/>
        </authorList>
    </citation>
    <scope>NUCLEOTIDE SEQUENCE [LARGE SCALE GENOMIC DNA]</scope>
    <source>
        <strain>K12 / W3110 / ATCC 27325 / DSM 5911</strain>
    </source>
</reference>
<reference key="2">
    <citation type="journal article" date="1996" name="DNA Res.">
        <title>A 460-kb DNA sequence of the Escherichia coli K-12 genome corresponding to the 40.1-50.0 min region on the linkage map.</title>
        <authorList>
            <person name="Itoh T."/>
            <person name="Aiba H."/>
            <person name="Baba T."/>
            <person name="Fujita K."/>
            <person name="Hayashi K."/>
            <person name="Inada T."/>
            <person name="Isono K."/>
            <person name="Kasai H."/>
            <person name="Kimura S."/>
            <person name="Kitakawa M."/>
            <person name="Kitagawa M."/>
            <person name="Makino K."/>
            <person name="Miki T."/>
            <person name="Mizobuchi K."/>
            <person name="Mori H."/>
            <person name="Mori T."/>
            <person name="Motomura K."/>
            <person name="Nakade S."/>
            <person name="Nakamura Y."/>
            <person name="Nashimoto H."/>
            <person name="Nishio Y."/>
            <person name="Oshima T."/>
            <person name="Saito N."/>
            <person name="Sampei G."/>
            <person name="Seki Y."/>
            <person name="Sivasundaram S."/>
            <person name="Tagami H."/>
            <person name="Takeda J."/>
            <person name="Takemoto K."/>
            <person name="Wada C."/>
            <person name="Yamamoto Y."/>
            <person name="Horiuchi T."/>
        </authorList>
    </citation>
    <scope>NUCLEOTIDE SEQUENCE [LARGE SCALE GENOMIC DNA]</scope>
    <source>
        <strain>K12 / W3110 / ATCC 27325 / DSM 5911</strain>
    </source>
</reference>
<reference key="3">
    <citation type="journal article" date="2006" name="Mol. Syst. Biol.">
        <title>Highly accurate genome sequences of Escherichia coli K-12 strains MG1655 and W3110.</title>
        <authorList>
            <person name="Hayashi K."/>
            <person name="Morooka N."/>
            <person name="Yamamoto Y."/>
            <person name="Fujita K."/>
            <person name="Isono K."/>
            <person name="Choi S."/>
            <person name="Ohtsubo E."/>
            <person name="Baba T."/>
            <person name="Wanner B.L."/>
            <person name="Mori H."/>
            <person name="Horiuchi T."/>
        </authorList>
    </citation>
    <scope>NUCLEOTIDE SEQUENCE [LARGE SCALE GENOMIC DNA]</scope>
    <source>
        <strain>K12 / W3110 / ATCC 27325 / DSM 5911</strain>
    </source>
</reference>
<evidence type="ECO:0000305" key="1"/>
<keyword id="KW-0233">DNA recombination</keyword>
<keyword id="KW-0238">DNA-binding</keyword>
<keyword id="KW-0814">Transposable element</keyword>
<keyword id="KW-0815">Transposition</keyword>
<sequence length="326" mass="37851">MSHQLTFADSEFSSKRRQTRKEIFLSRMEQILPWQNMVEVIEPFYPKAGNGRRPYPLETMLRIHCMQHWYNLSDGAMEDALYEIASMRLFARLSLDSALPDRTTIMNFRHLLEQHQLARQLFKTINRWLAEAGVMMTQGTLVDATIIEAPSSTKNKEQQRDPEMHQTKKGNQWHFGMKAHIGVDAKSGLTHSLVTTAANEHDLNQLGNLLHGEEQFVSADAGYQGAPQREELAEVDVDWLIAERPGKVRTLKQHPRKNKTAINIEYMKASIRARVEHPFRIIKRQFGFVKARYKGLLKNDNQLAMLFTLANLFRADQMIRQWERSH</sequence>
<feature type="chain" id="PRO_0000392494" description="Transposase InsH for insertion sequence element IS5-16">
    <location>
        <begin position="1"/>
        <end position="326"/>
    </location>
</feature>
<comment type="function">
    <text>Involved in the transposition of the insertion sequence IS5.</text>
</comment>
<comment type="similarity">
    <text evidence="1">Belongs to the transposase 11 family.</text>
</comment>
<comment type="caution">
    <text evidence="1">There is no equivalent of this gene in strain K12 / MG1655.</text>
</comment>
<protein>
    <recommendedName>
        <fullName>Transposase InsH for insertion sequence element IS5-16</fullName>
    </recommendedName>
</protein>